<reference key="1">
    <citation type="journal article" date="2003" name="Genome Res.">
        <title>Genome sequence of an M3 strain of Streptococcus pyogenes reveals a large-scale genomic rearrangement in invasive strains and new insights into phage evolution.</title>
        <authorList>
            <person name="Nakagawa I."/>
            <person name="Kurokawa K."/>
            <person name="Yamashita A."/>
            <person name="Nakata M."/>
            <person name="Tomiyasu Y."/>
            <person name="Okahashi N."/>
            <person name="Kawabata S."/>
            <person name="Yamazaki K."/>
            <person name="Shiba T."/>
            <person name="Yasunaga T."/>
            <person name="Hayashi H."/>
            <person name="Hattori M."/>
            <person name="Hamada S."/>
        </authorList>
    </citation>
    <scope>NUCLEOTIDE SEQUENCE [LARGE SCALE GENOMIC DNA]</scope>
    <source>
        <strain>SSI-1</strain>
    </source>
</reference>
<keyword id="KW-1003">Cell membrane</keyword>
<keyword id="KW-0378">Hydrolase</keyword>
<keyword id="KW-0472">Membrane</keyword>
<keyword id="KW-0479">Metal-binding</keyword>
<keyword id="KW-0482">Metalloprotease</keyword>
<keyword id="KW-0645">Protease</keyword>
<keyword id="KW-0812">Transmembrane</keyword>
<keyword id="KW-1133">Transmembrane helix</keyword>
<keyword id="KW-0862">Zinc</keyword>
<protein>
    <recommendedName>
        <fullName>Putative zinc metalloprotease SPs1691</fullName>
        <ecNumber>3.4.24.-</ecNumber>
    </recommendedName>
</protein>
<organism>
    <name type="scientific">Streptococcus pyogenes serotype M3 (strain SSI-1)</name>
    <dbReference type="NCBI Taxonomy" id="193567"/>
    <lineage>
        <taxon>Bacteria</taxon>
        <taxon>Bacillati</taxon>
        <taxon>Bacillota</taxon>
        <taxon>Bacilli</taxon>
        <taxon>Lactobacillales</taxon>
        <taxon>Streptococcaceae</taxon>
        <taxon>Streptococcus</taxon>
    </lineage>
</organism>
<gene>
    <name type="primary">eep</name>
    <name type="ordered locus">SPs1691</name>
</gene>
<proteinExistence type="inferred from homology"/>
<feature type="chain" id="PRO_0000411454" description="Putative zinc metalloprotease SPs1691">
    <location>
        <begin position="1"/>
        <end position="419"/>
    </location>
</feature>
<feature type="transmembrane region" description="Helical" evidence="1">
    <location>
        <begin position="169"/>
        <end position="191"/>
    </location>
</feature>
<feature type="transmembrane region" description="Helical" evidence="1">
    <location>
        <begin position="301"/>
        <end position="323"/>
    </location>
</feature>
<feature type="transmembrane region" description="Helical" evidence="1">
    <location>
        <begin position="343"/>
        <end position="365"/>
    </location>
</feature>
<feature type="transmembrane region" description="Helical" evidence="1">
    <location>
        <begin position="392"/>
        <end position="411"/>
    </location>
</feature>
<feature type="domain" description="PDZ">
    <location>
        <begin position="175"/>
        <end position="274"/>
    </location>
</feature>
<feature type="active site" evidence="2">
    <location>
        <position position="19"/>
    </location>
</feature>
<feature type="binding site" evidence="2">
    <location>
        <position position="18"/>
    </location>
    <ligand>
        <name>Zn(2+)</name>
        <dbReference type="ChEBI" id="CHEBI:29105"/>
        <note>catalytic</note>
    </ligand>
</feature>
<feature type="binding site" evidence="2">
    <location>
        <position position="22"/>
    </location>
    <ligand>
        <name>Zn(2+)</name>
        <dbReference type="ChEBI" id="CHEBI:29105"/>
        <note>catalytic</note>
    </ligand>
</feature>
<dbReference type="EC" id="3.4.24.-"/>
<dbReference type="EMBL" id="BA000034">
    <property type="protein sequence ID" value="BAC64786.1"/>
    <property type="molecule type" value="Genomic_DNA"/>
</dbReference>
<dbReference type="SMR" id="P0DD33"/>
<dbReference type="KEGG" id="sps:SPs1691"/>
<dbReference type="HOGENOM" id="CLU_025778_1_0_9"/>
<dbReference type="GO" id="GO:0005886">
    <property type="term" value="C:plasma membrane"/>
    <property type="evidence" value="ECO:0007669"/>
    <property type="project" value="UniProtKB-SubCell"/>
</dbReference>
<dbReference type="GO" id="GO:0046872">
    <property type="term" value="F:metal ion binding"/>
    <property type="evidence" value="ECO:0007669"/>
    <property type="project" value="UniProtKB-KW"/>
</dbReference>
<dbReference type="GO" id="GO:0004222">
    <property type="term" value="F:metalloendopeptidase activity"/>
    <property type="evidence" value="ECO:0007669"/>
    <property type="project" value="InterPro"/>
</dbReference>
<dbReference type="GO" id="GO:0006508">
    <property type="term" value="P:proteolysis"/>
    <property type="evidence" value="ECO:0007669"/>
    <property type="project" value="UniProtKB-KW"/>
</dbReference>
<dbReference type="CDD" id="cd06163">
    <property type="entry name" value="S2P-M50_PDZ_RseP-like"/>
    <property type="match status" value="1"/>
</dbReference>
<dbReference type="Gene3D" id="2.30.42.10">
    <property type="match status" value="1"/>
</dbReference>
<dbReference type="InterPro" id="IPR001478">
    <property type="entry name" value="PDZ"/>
</dbReference>
<dbReference type="InterPro" id="IPR036034">
    <property type="entry name" value="PDZ_sf"/>
</dbReference>
<dbReference type="InterPro" id="IPR004387">
    <property type="entry name" value="Pept_M50_Zn"/>
</dbReference>
<dbReference type="InterPro" id="IPR008915">
    <property type="entry name" value="Peptidase_M50"/>
</dbReference>
<dbReference type="NCBIfam" id="TIGR00054">
    <property type="entry name" value="RIP metalloprotease RseP"/>
    <property type="match status" value="1"/>
</dbReference>
<dbReference type="PANTHER" id="PTHR42837:SF2">
    <property type="entry name" value="MEMBRANE METALLOPROTEASE ARASP2, CHLOROPLASTIC-RELATED"/>
    <property type="match status" value="1"/>
</dbReference>
<dbReference type="PANTHER" id="PTHR42837">
    <property type="entry name" value="REGULATOR OF SIGMA-E PROTEASE RSEP"/>
    <property type="match status" value="1"/>
</dbReference>
<dbReference type="Pfam" id="PF13180">
    <property type="entry name" value="PDZ_2"/>
    <property type="match status" value="1"/>
</dbReference>
<dbReference type="Pfam" id="PF02163">
    <property type="entry name" value="Peptidase_M50"/>
    <property type="match status" value="1"/>
</dbReference>
<dbReference type="SUPFAM" id="SSF50156">
    <property type="entry name" value="PDZ domain-like"/>
    <property type="match status" value="1"/>
</dbReference>
<dbReference type="PROSITE" id="PS00142">
    <property type="entry name" value="ZINC_PROTEASE"/>
    <property type="match status" value="1"/>
</dbReference>
<evidence type="ECO:0000255" key="1"/>
<evidence type="ECO:0000255" key="2">
    <source>
        <dbReference type="PROSITE-ProRule" id="PRU10095"/>
    </source>
</evidence>
<evidence type="ECO:0000305" key="3"/>
<name>Y1689_STRPQ</name>
<sequence>MLGIITFIIIFGILVIVHEFGHFYFAKKSGILVREFAIGMGPKIFSHVDQGGTLYTLRMLPLGGYVRMAGWGDDKTEIKTGTPASLTLNEQGFVKRINLSQSKLDPTSLPMHVTGYDLEDQLSITGLVLEETKTYKVAHDATIVEEDGTEIRIAPLDVQYQNASIGGRLITNFAGPMNNFILGIVVFILLVFLQGGMPDFSSNHVRVQENGAAAKAGLRDNDQIVAINGYKVNSWNDLTEAVNLATRDLGPSQTIKVTYKSHQRLKTVAVKPQKHAKTYTIGVKASLKTGFKDKLLGGLELAWSGAFTILNALKGLITGFSLNKLGGPVAMYDMSNQAAQNGLESVLSLMAMLSINLGIFNLIPIPALDGGKILMNIIEAIRRKPIKQETEAYITLAGVAIMVVLMIAVTWNDIMRVFF</sequence>
<comment type="cofactor">
    <cofactor evidence="3">
        <name>Zn(2+)</name>
        <dbReference type="ChEBI" id="CHEBI:29105"/>
    </cofactor>
</comment>
<comment type="subcellular location">
    <subcellularLocation>
        <location evidence="3">Cell membrane</location>
        <topology evidence="3">Multi-pass membrane protein</topology>
    </subcellularLocation>
</comment>
<comment type="similarity">
    <text evidence="3">Belongs to the peptidase M50B family.</text>
</comment>
<accession>P0DD33</accession>
<accession>Q79W78</accession>
<accession>Q8K5S6</accession>